<name>HFQ_BURL3</name>
<comment type="function">
    <text evidence="1">RNA chaperone that binds small regulatory RNA (sRNAs) and mRNAs to facilitate mRNA translational regulation in response to envelope stress, environmental stress and changes in metabolite concentrations. Also binds with high specificity to tRNAs.</text>
</comment>
<comment type="subunit">
    <text evidence="1">Homohexamer.</text>
</comment>
<comment type="similarity">
    <text evidence="1">Belongs to the Hfq family.</text>
</comment>
<reference key="1">
    <citation type="submission" date="2005-10" db="EMBL/GenBank/DDBJ databases">
        <title>Complete sequence of chromosome 1 of Burkholderia sp. 383.</title>
        <authorList>
            <consortium name="US DOE Joint Genome Institute"/>
            <person name="Copeland A."/>
            <person name="Lucas S."/>
            <person name="Lapidus A."/>
            <person name="Barry K."/>
            <person name="Detter J.C."/>
            <person name="Glavina T."/>
            <person name="Hammon N."/>
            <person name="Israni S."/>
            <person name="Pitluck S."/>
            <person name="Chain P."/>
            <person name="Malfatti S."/>
            <person name="Shin M."/>
            <person name="Vergez L."/>
            <person name="Schmutz J."/>
            <person name="Larimer F."/>
            <person name="Land M."/>
            <person name="Kyrpides N."/>
            <person name="Lykidis A."/>
            <person name="Richardson P."/>
        </authorList>
    </citation>
    <scope>NUCLEOTIDE SEQUENCE [LARGE SCALE GENOMIC DNA]</scope>
    <source>
        <strain>ATCC 17760 / DSM 23089 / LMG 22485 / NCIMB 9086 / R18194 / 383</strain>
    </source>
</reference>
<keyword id="KW-0694">RNA-binding</keyword>
<keyword id="KW-0346">Stress response</keyword>
<evidence type="ECO:0000255" key="1">
    <source>
        <dbReference type="HAMAP-Rule" id="MF_00436"/>
    </source>
</evidence>
<evidence type="ECO:0000255" key="2">
    <source>
        <dbReference type="PROSITE-ProRule" id="PRU01346"/>
    </source>
</evidence>
<proteinExistence type="inferred from homology"/>
<protein>
    <recommendedName>
        <fullName evidence="1">RNA-binding protein Hfq</fullName>
    </recommendedName>
</protein>
<sequence length="79" mass="8849">MSNKGQLLQDPFLNALRKEHVPVSIYLVNGIKLQGNIESFDQYVVLLRNTVTQMVYKHAISTVVPARPVNFHPDAEASS</sequence>
<feature type="chain" id="PRO_0000265143" description="RNA-binding protein Hfq">
    <location>
        <begin position="1"/>
        <end position="79"/>
    </location>
</feature>
<feature type="domain" description="Sm" evidence="2">
    <location>
        <begin position="10"/>
        <end position="69"/>
    </location>
</feature>
<dbReference type="EMBL" id="CP000151">
    <property type="protein sequence ID" value="ABB08702.1"/>
    <property type="molecule type" value="Genomic_DNA"/>
</dbReference>
<dbReference type="RefSeq" id="WP_006399927.1">
    <property type="nucleotide sequence ID" value="NZ_WNDV01000021.1"/>
</dbReference>
<dbReference type="SMR" id="Q39FR4"/>
<dbReference type="GeneID" id="98105673"/>
<dbReference type="KEGG" id="bur:Bcep18194_A5108"/>
<dbReference type="HOGENOM" id="CLU_113688_2_2_4"/>
<dbReference type="Proteomes" id="UP000002705">
    <property type="component" value="Chromosome 1"/>
</dbReference>
<dbReference type="GO" id="GO:0005829">
    <property type="term" value="C:cytosol"/>
    <property type="evidence" value="ECO:0007669"/>
    <property type="project" value="TreeGrafter"/>
</dbReference>
<dbReference type="GO" id="GO:0003723">
    <property type="term" value="F:RNA binding"/>
    <property type="evidence" value="ECO:0007669"/>
    <property type="project" value="UniProtKB-UniRule"/>
</dbReference>
<dbReference type="GO" id="GO:0006355">
    <property type="term" value="P:regulation of DNA-templated transcription"/>
    <property type="evidence" value="ECO:0007669"/>
    <property type="project" value="InterPro"/>
</dbReference>
<dbReference type="GO" id="GO:0043487">
    <property type="term" value="P:regulation of RNA stability"/>
    <property type="evidence" value="ECO:0007669"/>
    <property type="project" value="TreeGrafter"/>
</dbReference>
<dbReference type="GO" id="GO:0045974">
    <property type="term" value="P:regulation of translation, ncRNA-mediated"/>
    <property type="evidence" value="ECO:0007669"/>
    <property type="project" value="TreeGrafter"/>
</dbReference>
<dbReference type="CDD" id="cd01716">
    <property type="entry name" value="Hfq"/>
    <property type="match status" value="1"/>
</dbReference>
<dbReference type="FunFam" id="2.30.30.100:FF:000001">
    <property type="entry name" value="RNA-binding protein Hfq"/>
    <property type="match status" value="1"/>
</dbReference>
<dbReference type="Gene3D" id="2.30.30.100">
    <property type="match status" value="1"/>
</dbReference>
<dbReference type="HAMAP" id="MF_00436">
    <property type="entry name" value="Hfq"/>
    <property type="match status" value="1"/>
</dbReference>
<dbReference type="InterPro" id="IPR005001">
    <property type="entry name" value="Hfq"/>
</dbReference>
<dbReference type="InterPro" id="IPR010920">
    <property type="entry name" value="LSM_dom_sf"/>
</dbReference>
<dbReference type="InterPro" id="IPR047575">
    <property type="entry name" value="Sm"/>
</dbReference>
<dbReference type="NCBIfam" id="TIGR02383">
    <property type="entry name" value="Hfq"/>
    <property type="match status" value="1"/>
</dbReference>
<dbReference type="NCBIfam" id="NF001602">
    <property type="entry name" value="PRK00395.1"/>
    <property type="match status" value="1"/>
</dbReference>
<dbReference type="PANTHER" id="PTHR34772">
    <property type="entry name" value="RNA-BINDING PROTEIN HFQ"/>
    <property type="match status" value="1"/>
</dbReference>
<dbReference type="PANTHER" id="PTHR34772:SF1">
    <property type="entry name" value="RNA-BINDING PROTEIN HFQ"/>
    <property type="match status" value="1"/>
</dbReference>
<dbReference type="Pfam" id="PF17209">
    <property type="entry name" value="Hfq"/>
    <property type="match status" value="1"/>
</dbReference>
<dbReference type="SUPFAM" id="SSF50182">
    <property type="entry name" value="Sm-like ribonucleoproteins"/>
    <property type="match status" value="1"/>
</dbReference>
<dbReference type="PROSITE" id="PS52002">
    <property type="entry name" value="SM"/>
    <property type="match status" value="1"/>
</dbReference>
<gene>
    <name evidence="1" type="primary">hfq</name>
    <name type="ordered locus">Bcep18194_A5108</name>
</gene>
<organism>
    <name type="scientific">Burkholderia lata (strain ATCC 17760 / DSM 23089 / LMG 22485 / NCIMB 9086 / R18194 / 383)</name>
    <dbReference type="NCBI Taxonomy" id="482957"/>
    <lineage>
        <taxon>Bacteria</taxon>
        <taxon>Pseudomonadati</taxon>
        <taxon>Pseudomonadota</taxon>
        <taxon>Betaproteobacteria</taxon>
        <taxon>Burkholderiales</taxon>
        <taxon>Burkholderiaceae</taxon>
        <taxon>Burkholderia</taxon>
        <taxon>Burkholderia cepacia complex</taxon>
    </lineage>
</organism>
<accession>Q39FR4</accession>